<protein>
    <recommendedName>
        <fullName evidence="4">Protein CHLOROPLAST VESICULATION</fullName>
    </recommendedName>
</protein>
<dbReference type="EMBL" id="AC006053">
    <property type="protein sequence ID" value="AAM15100.1"/>
    <property type="molecule type" value="Genomic_DNA"/>
</dbReference>
<dbReference type="EMBL" id="CP002685">
    <property type="protein sequence ID" value="AEC07726.1"/>
    <property type="molecule type" value="Genomic_DNA"/>
</dbReference>
<dbReference type="EMBL" id="CP002685">
    <property type="protein sequence ID" value="AEC07727.1"/>
    <property type="molecule type" value="Genomic_DNA"/>
</dbReference>
<dbReference type="EMBL" id="AY034981">
    <property type="protein sequence ID" value="AAK59486.1"/>
    <property type="molecule type" value="mRNA"/>
</dbReference>
<dbReference type="EMBL" id="AY063071">
    <property type="protein sequence ID" value="AAL34245.1"/>
    <property type="molecule type" value="mRNA"/>
</dbReference>
<dbReference type="EMBL" id="AK227210">
    <property type="protein sequence ID" value="BAE99248.1"/>
    <property type="molecule type" value="mRNA"/>
</dbReference>
<dbReference type="EMBL" id="AY088242">
    <property type="protein sequence ID" value="AAM65783.1"/>
    <property type="molecule type" value="mRNA"/>
</dbReference>
<dbReference type="RefSeq" id="NP_850063.1">
    <molecule id="Q8S8K8-1"/>
    <property type="nucleotide sequence ID" value="NM_179732.4"/>
</dbReference>
<dbReference type="RefSeq" id="NP_850064.1">
    <molecule id="Q8S8K8-2"/>
    <property type="nucleotide sequence ID" value="NM_179733.1"/>
</dbReference>
<dbReference type="FunCoup" id="Q8S8K8">
    <property type="interactions" value="41"/>
</dbReference>
<dbReference type="STRING" id="3702.Q8S8K8"/>
<dbReference type="iPTMnet" id="Q8S8K8"/>
<dbReference type="PaxDb" id="3702-AT2G25625.1"/>
<dbReference type="EnsemblPlants" id="AT2G25625.1">
    <molecule id="Q8S8K8-1"/>
    <property type="protein sequence ID" value="AT2G25625.1"/>
    <property type="gene ID" value="AT2G25625"/>
</dbReference>
<dbReference type="EnsemblPlants" id="AT2G25625.2">
    <molecule id="Q8S8K8-2"/>
    <property type="protein sequence ID" value="AT2G25625.2"/>
    <property type="gene ID" value="AT2G25625"/>
</dbReference>
<dbReference type="GeneID" id="817103"/>
<dbReference type="Gramene" id="AT2G25625.1">
    <molecule id="Q8S8K8-1"/>
    <property type="protein sequence ID" value="AT2G25625.1"/>
    <property type="gene ID" value="AT2G25625"/>
</dbReference>
<dbReference type="Gramene" id="AT2G25625.2">
    <molecule id="Q8S8K8-2"/>
    <property type="protein sequence ID" value="AT2G25625.2"/>
    <property type="gene ID" value="AT2G25625"/>
</dbReference>
<dbReference type="KEGG" id="ath:AT2G25625"/>
<dbReference type="Araport" id="AT2G25625"/>
<dbReference type="TAIR" id="AT2G25625">
    <property type="gene designation" value="CV"/>
</dbReference>
<dbReference type="eggNOG" id="ENOG502S9UX">
    <property type="taxonomic scope" value="Eukaryota"/>
</dbReference>
<dbReference type="HOGENOM" id="CLU_118309_0_0_1"/>
<dbReference type="InParanoid" id="Q8S8K8"/>
<dbReference type="OMA" id="HISWRRT"/>
<dbReference type="OrthoDB" id="1892100at2759"/>
<dbReference type="PhylomeDB" id="Q8S8K8"/>
<dbReference type="PRO" id="PR:Q8S8K8"/>
<dbReference type="Proteomes" id="UP000006548">
    <property type="component" value="Chromosome 2"/>
</dbReference>
<dbReference type="ExpressionAtlas" id="Q8S8K8">
    <property type="expression patterns" value="baseline and differential"/>
</dbReference>
<dbReference type="GO" id="GO:0009941">
    <property type="term" value="C:chloroplast envelope"/>
    <property type="evidence" value="ECO:0000314"/>
    <property type="project" value="UniProtKB"/>
</dbReference>
<dbReference type="GO" id="GO:0031969">
    <property type="term" value="C:chloroplast membrane"/>
    <property type="evidence" value="ECO:0007669"/>
    <property type="project" value="UniProtKB-SubCell"/>
</dbReference>
<dbReference type="GO" id="GO:0009535">
    <property type="term" value="C:chloroplast thylakoid membrane"/>
    <property type="evidence" value="ECO:0000314"/>
    <property type="project" value="TAIR"/>
</dbReference>
<dbReference type="GO" id="GO:0097708">
    <property type="term" value="C:intracellular vesicle"/>
    <property type="evidence" value="ECO:0000314"/>
    <property type="project" value="TAIR"/>
</dbReference>
<dbReference type="GO" id="GO:0005773">
    <property type="term" value="C:vacuole"/>
    <property type="evidence" value="ECO:0000314"/>
    <property type="project" value="UniProtKB"/>
</dbReference>
<dbReference type="GO" id="GO:1904821">
    <property type="term" value="P:chloroplast disassembly"/>
    <property type="evidence" value="ECO:0000315"/>
    <property type="project" value="TAIR"/>
</dbReference>
<dbReference type="GO" id="GO:0010150">
    <property type="term" value="P:leaf senescence"/>
    <property type="evidence" value="ECO:0000270"/>
    <property type="project" value="UniProtKB"/>
</dbReference>
<dbReference type="GO" id="GO:0009735">
    <property type="term" value="P:response to cytokinin"/>
    <property type="evidence" value="ECO:0000270"/>
    <property type="project" value="UniProtKB"/>
</dbReference>
<dbReference type="GO" id="GO:0006979">
    <property type="term" value="P:response to oxidative stress"/>
    <property type="evidence" value="ECO:0000315"/>
    <property type="project" value="UniProtKB"/>
</dbReference>
<dbReference type="GO" id="GO:1902074">
    <property type="term" value="P:response to salt"/>
    <property type="evidence" value="ECO:0000315"/>
    <property type="project" value="UniProtKB"/>
</dbReference>
<dbReference type="GO" id="GO:0009414">
    <property type="term" value="P:response to water deprivation"/>
    <property type="evidence" value="ECO:0000315"/>
    <property type="project" value="UniProtKB"/>
</dbReference>
<dbReference type="InterPro" id="IPR053350">
    <property type="entry name" value="CV_Inducer"/>
</dbReference>
<dbReference type="PANTHER" id="PTHR37210">
    <property type="entry name" value="EXPRESSED PROTEIN"/>
    <property type="match status" value="1"/>
</dbReference>
<dbReference type="PANTHER" id="PTHR37210:SF2">
    <property type="entry name" value="PROTEIN CHLOROPLAST VESICULATION"/>
    <property type="match status" value="1"/>
</dbReference>
<sequence>MAGRISCCLNLPPLDSNSAQSLASLLKTTSKISCRRTENETEPRKNKCSFVLGVAATVVIGGIQINDVASVEAAVVKSPVEEMAAGVVPPRRWSDKRTCPPWLENSLETIVPENLPRPSAHRRLELAGLAKGDAPPVGVVMTRVNRGGCFSV</sequence>
<accession>Q8S8K8</accession>
<accession>Q94CB8</accession>
<feature type="transit peptide" description="Chloroplast" evidence="1">
    <location>
        <begin position="1"/>
        <end position="22"/>
    </location>
</feature>
<feature type="chain" id="PRO_0000454278" description="Protein CHLOROPLAST VESICULATION">
    <location>
        <begin position="23"/>
        <end position="152"/>
    </location>
</feature>
<feature type="transmembrane region" description="Helical" evidence="1">
    <location>
        <begin position="48"/>
        <end position="65"/>
    </location>
</feature>
<feature type="region of interest" description="Important for chloroplast destabilization and the formation of CV-containing vesicles" evidence="2">
    <location>
        <begin position="92"/>
        <end position="152"/>
    </location>
</feature>
<feature type="splice variant" id="VSP_061274" description="In isoform 2.">
    <original>CR</original>
    <variation>W</variation>
    <location>
        <begin position="34"/>
        <end position="35"/>
    </location>
</feature>
<organism>
    <name type="scientific">Arabidopsis thaliana</name>
    <name type="common">Mouse-ear cress</name>
    <dbReference type="NCBI Taxonomy" id="3702"/>
    <lineage>
        <taxon>Eukaryota</taxon>
        <taxon>Viridiplantae</taxon>
        <taxon>Streptophyta</taxon>
        <taxon>Embryophyta</taxon>
        <taxon>Tracheophyta</taxon>
        <taxon>Spermatophyta</taxon>
        <taxon>Magnoliopsida</taxon>
        <taxon>eudicotyledons</taxon>
        <taxon>Gunneridae</taxon>
        <taxon>Pentapetalae</taxon>
        <taxon>rosids</taxon>
        <taxon>malvids</taxon>
        <taxon>Brassicales</taxon>
        <taxon>Brassicaceae</taxon>
        <taxon>Camelineae</taxon>
        <taxon>Arabidopsis</taxon>
    </lineage>
</organism>
<proteinExistence type="evidence at protein level"/>
<name>CV_ARATH</name>
<gene>
    <name evidence="4" type="primary">CV</name>
    <name evidence="5" type="ordered locus">At2g25625</name>
    <name evidence="6" type="ORF">F3N11</name>
</gene>
<evidence type="ECO:0000255" key="1"/>
<evidence type="ECO:0000269" key="2">
    <source>
    </source>
</evidence>
<evidence type="ECO:0000269" key="3">
    <source>
    </source>
</evidence>
<evidence type="ECO:0000303" key="4">
    <source>
    </source>
</evidence>
<evidence type="ECO:0000312" key="5">
    <source>
        <dbReference type="Araport" id="AT2G25625"/>
    </source>
</evidence>
<evidence type="ECO:0000312" key="6">
    <source>
        <dbReference type="EMBL" id="AAM15100.1"/>
    </source>
</evidence>
<reference key="1">
    <citation type="journal article" date="1999" name="Nature">
        <title>Sequence and analysis of chromosome 2 of the plant Arabidopsis thaliana.</title>
        <authorList>
            <person name="Lin X."/>
            <person name="Kaul S."/>
            <person name="Rounsley S.D."/>
            <person name="Shea T.P."/>
            <person name="Benito M.-I."/>
            <person name="Town C.D."/>
            <person name="Fujii C.Y."/>
            <person name="Mason T.M."/>
            <person name="Bowman C.L."/>
            <person name="Barnstead M.E."/>
            <person name="Feldblyum T.V."/>
            <person name="Buell C.R."/>
            <person name="Ketchum K.A."/>
            <person name="Lee J.J."/>
            <person name="Ronning C.M."/>
            <person name="Koo H.L."/>
            <person name="Moffat K.S."/>
            <person name="Cronin L.A."/>
            <person name="Shen M."/>
            <person name="Pai G."/>
            <person name="Van Aken S."/>
            <person name="Umayam L."/>
            <person name="Tallon L.J."/>
            <person name="Gill J.E."/>
            <person name="Adams M.D."/>
            <person name="Carrera A.J."/>
            <person name="Creasy T.H."/>
            <person name="Goodman H.M."/>
            <person name="Somerville C.R."/>
            <person name="Copenhaver G.P."/>
            <person name="Preuss D."/>
            <person name="Nierman W.C."/>
            <person name="White O."/>
            <person name="Eisen J.A."/>
            <person name="Salzberg S.L."/>
            <person name="Fraser C.M."/>
            <person name="Venter J.C."/>
        </authorList>
    </citation>
    <scope>NUCLEOTIDE SEQUENCE [LARGE SCALE GENOMIC DNA]</scope>
    <source>
        <strain>cv. Columbia</strain>
    </source>
</reference>
<reference key="2">
    <citation type="journal article" date="2017" name="Plant J.">
        <title>Araport11: a complete reannotation of the Arabidopsis thaliana reference genome.</title>
        <authorList>
            <person name="Cheng C.Y."/>
            <person name="Krishnakumar V."/>
            <person name="Chan A.P."/>
            <person name="Thibaud-Nissen F."/>
            <person name="Schobel S."/>
            <person name="Town C.D."/>
        </authorList>
    </citation>
    <scope>GENOME REANNOTATION</scope>
    <source>
        <strain>cv. Columbia</strain>
    </source>
</reference>
<reference key="3">
    <citation type="journal article" date="2003" name="Science">
        <title>Empirical analysis of transcriptional activity in the Arabidopsis genome.</title>
        <authorList>
            <person name="Yamada K."/>
            <person name="Lim J."/>
            <person name="Dale J.M."/>
            <person name="Chen H."/>
            <person name="Shinn P."/>
            <person name="Palm C.J."/>
            <person name="Southwick A.M."/>
            <person name="Wu H.C."/>
            <person name="Kim C.J."/>
            <person name="Nguyen M."/>
            <person name="Pham P.K."/>
            <person name="Cheuk R.F."/>
            <person name="Karlin-Newmann G."/>
            <person name="Liu S.X."/>
            <person name="Lam B."/>
            <person name="Sakano H."/>
            <person name="Wu T."/>
            <person name="Yu G."/>
            <person name="Miranda M."/>
            <person name="Quach H.L."/>
            <person name="Tripp M."/>
            <person name="Chang C.H."/>
            <person name="Lee J.M."/>
            <person name="Toriumi M.J."/>
            <person name="Chan M.M."/>
            <person name="Tang C.C."/>
            <person name="Onodera C.S."/>
            <person name="Deng J.M."/>
            <person name="Akiyama K."/>
            <person name="Ansari Y."/>
            <person name="Arakawa T."/>
            <person name="Banh J."/>
            <person name="Banno F."/>
            <person name="Bowser L."/>
            <person name="Brooks S.Y."/>
            <person name="Carninci P."/>
            <person name="Chao Q."/>
            <person name="Choy N."/>
            <person name="Enju A."/>
            <person name="Goldsmith A.D."/>
            <person name="Gurjal M."/>
            <person name="Hansen N.F."/>
            <person name="Hayashizaki Y."/>
            <person name="Johnson-Hopson C."/>
            <person name="Hsuan V.W."/>
            <person name="Iida K."/>
            <person name="Karnes M."/>
            <person name="Khan S."/>
            <person name="Koesema E."/>
            <person name="Ishida J."/>
            <person name="Jiang P.X."/>
            <person name="Jones T."/>
            <person name="Kawai J."/>
            <person name="Kamiya A."/>
            <person name="Meyers C."/>
            <person name="Nakajima M."/>
            <person name="Narusaka M."/>
            <person name="Seki M."/>
            <person name="Sakurai T."/>
            <person name="Satou M."/>
            <person name="Tamse R."/>
            <person name="Vaysberg M."/>
            <person name="Wallender E.K."/>
            <person name="Wong C."/>
            <person name="Yamamura Y."/>
            <person name="Yuan S."/>
            <person name="Shinozaki K."/>
            <person name="Davis R.W."/>
            <person name="Theologis A."/>
            <person name="Ecker J.R."/>
        </authorList>
    </citation>
    <scope>NUCLEOTIDE SEQUENCE [LARGE SCALE MRNA] (ISOFORM 2)</scope>
    <source>
        <strain>cv. Columbia</strain>
    </source>
</reference>
<reference key="4">
    <citation type="submission" date="2006-07" db="EMBL/GenBank/DDBJ databases">
        <title>Large-scale analysis of RIKEN Arabidopsis full-length (RAFL) cDNAs.</title>
        <authorList>
            <person name="Totoki Y."/>
            <person name="Seki M."/>
            <person name="Ishida J."/>
            <person name="Nakajima M."/>
            <person name="Enju A."/>
            <person name="Kamiya A."/>
            <person name="Narusaka M."/>
            <person name="Shin-i T."/>
            <person name="Nakagawa M."/>
            <person name="Sakamoto N."/>
            <person name="Oishi K."/>
            <person name="Kohara Y."/>
            <person name="Kobayashi M."/>
            <person name="Toyoda A."/>
            <person name="Sakaki Y."/>
            <person name="Sakurai T."/>
            <person name="Iida K."/>
            <person name="Akiyama K."/>
            <person name="Satou M."/>
            <person name="Toyoda T."/>
            <person name="Konagaya A."/>
            <person name="Carninci P."/>
            <person name="Kawai J."/>
            <person name="Hayashizaki Y."/>
            <person name="Shinozaki K."/>
        </authorList>
    </citation>
    <scope>NUCLEOTIDE SEQUENCE [LARGE SCALE MRNA] (ISOFORM 1)</scope>
    <source>
        <strain>cv. Columbia</strain>
    </source>
</reference>
<reference key="5">
    <citation type="submission" date="2002-03" db="EMBL/GenBank/DDBJ databases">
        <title>Full-length cDNA from Arabidopsis thaliana.</title>
        <authorList>
            <person name="Brover V.V."/>
            <person name="Troukhan M.E."/>
            <person name="Alexandrov N.A."/>
            <person name="Lu Y.-P."/>
            <person name="Flavell R.B."/>
            <person name="Feldmann K.A."/>
        </authorList>
    </citation>
    <scope>NUCLEOTIDE SEQUENCE [LARGE SCALE MRNA] (ISOFORM 1)</scope>
</reference>
<reference key="6">
    <citation type="journal article" date="2014" name="Plant Cell">
        <title>Stress-induced chloroplast degradation in Arabidopsis is regulated via a process independent of autophagy and senescence-associated vacuoles.</title>
        <authorList>
            <person name="Wang S."/>
            <person name="Blumwald E."/>
        </authorList>
    </citation>
    <scope>FUNCTION</scope>
    <scope>DISRUPTION PHENOTYPE</scope>
    <scope>DEVELOPMENTAL STAGE</scope>
    <scope>INTERACTION WITH PSBO1</scope>
    <scope>INDUCTION BY SALT AND OXIDATIVE STRESS</scope>
    <scope>REPRESSION BY CYTOKININ</scope>
    <scope>TISSUE SPECIFICITY</scope>
    <scope>SUBCELLULAR LOCATION</scope>
    <source>
        <strain>cv. Columbia</strain>
    </source>
</reference>
<reference key="7">
    <citation type="journal article" date="2018" name="New Phytol.">
        <title>Transcription factor RD26 is a key regulator of metabolic reprogramming during dark-induced senescence.</title>
        <authorList>
            <person name="Kamranfar I."/>
            <person name="Xue G.-P."/>
            <person name="Tohge T."/>
            <person name="Sedaghatmehr M."/>
            <person name="Fernie A.R."/>
            <person name="Balazadeh S."/>
            <person name="Mueller-Roeber B."/>
        </authorList>
    </citation>
    <scope>INDUCTION BY NAC072/RD26</scope>
    <source>
        <strain>cv. Columbia</strain>
    </source>
</reference>
<comment type="function">
    <text evidence="2">Triggers stress-induced chloroplast degradation, independently of autophagy and senescence-associated vacuoles (PubMed:25538186). After targeting to the chloroplast, triggers its destabilization and subsequent disassembly, inducing the formation of CV-containing vesicles (CCVs) carrying stromal proteins, envelope membrane proteins, and thylakoid membrane proteins which are released from the chloroplasts and mobilized to the vacuole for proteolysis (PubMed:25538186).</text>
</comment>
<comment type="subunit">
    <text evidence="2">Interacts with the photosystem II subunit PsbO1 via its C-terminal region in the chloroplast thylakoid membrane and in CV-containing vesicles (CCVs).</text>
</comment>
<comment type="subcellular location">
    <subcellularLocation>
        <location evidence="2">Plastid</location>
        <location evidence="2">Chloroplast membrane</location>
        <topology evidence="1">Single-pass membrane protein</topology>
    </subcellularLocation>
    <subcellularLocation>
        <location evidence="2">Plastid</location>
        <location evidence="2">Chloroplast thylakoid membrane</location>
        <topology evidence="1">Single-pass membrane protein</topology>
    </subcellularLocation>
    <subcellularLocation>
        <location evidence="2">Plastid</location>
        <location evidence="2">Chloroplast envelope</location>
    </subcellularLocation>
    <subcellularLocation>
        <location evidence="2">Vacuole</location>
    </subcellularLocation>
    <subcellularLocation>
        <location evidence="2">Vesicle</location>
    </subcellularLocation>
    <text evidence="2">Present in vesicle-like spots observed in destabilized chloroplasts; these CV-containing vesicles (CCVs) carrying stromal proteins, envelope membrane proteins, and thylakoid membrane proteins translocate later to the cytosol before being mobilized to the vacuole for proteolysis.</text>
</comment>
<comment type="alternative products">
    <event type="alternative splicing"/>
    <isoform>
        <id>Q8S8K8-1</id>
        <name>1</name>
        <sequence type="displayed"/>
    </isoform>
    <isoform>
        <id>Q8S8K8-2</id>
        <name>2</name>
        <sequence type="described" ref="VSP_061274"/>
    </isoform>
</comment>
<comment type="tissue specificity">
    <text evidence="2">Mostly expressed in senescent and mature leaves but not in young leaves.</text>
</comment>
<comment type="developmental stage">
    <text evidence="2">Accumulates during senescence.</text>
</comment>
<comment type="induction">
    <text evidence="2 3">Induced by abiotic stresses such as salt stress and methyl viologen (MV)-induced oxidative stress (PubMed:25538186). Triggered by NAC072/RD26 during senescence (PubMed:29659022). Down-regulated by cytokinin (PubMed:25538186).</text>
</comment>
<comment type="disruption phenotype">
    <text evidence="2">Delayed chloroplast turnover and senescence induced by abiotic stress and associated with an enhanced tolerance to drought, salinity, and oxidative stress.</text>
</comment>
<keyword id="KW-0025">Alternative splicing</keyword>
<keyword id="KW-0150">Chloroplast</keyword>
<keyword id="KW-0472">Membrane</keyword>
<keyword id="KW-0934">Plastid</keyword>
<keyword id="KW-1185">Reference proteome</keyword>
<keyword id="KW-0346">Stress response</keyword>
<keyword id="KW-0793">Thylakoid</keyword>
<keyword id="KW-0809">Transit peptide</keyword>
<keyword id="KW-0812">Transmembrane</keyword>
<keyword id="KW-1133">Transmembrane helix</keyword>
<keyword id="KW-0926">Vacuole</keyword>